<organism>
    <name type="scientific">Nostoc sp. (strain PCC 7120 / SAG 25.82 / UTEX 2576)</name>
    <dbReference type="NCBI Taxonomy" id="103690"/>
    <lineage>
        <taxon>Bacteria</taxon>
        <taxon>Bacillati</taxon>
        <taxon>Cyanobacteriota</taxon>
        <taxon>Cyanophyceae</taxon>
        <taxon>Nostocales</taxon>
        <taxon>Nostocaceae</taxon>
        <taxon>Nostoc</taxon>
    </lineage>
</organism>
<protein>
    <recommendedName>
        <fullName>Global nitrogen regulator</fullName>
    </recommendedName>
    <alternativeName>
        <fullName>DNA-binding protein VF1</fullName>
    </alternativeName>
    <alternativeName>
        <fullName>Nitrogen-responsive regulatory protein</fullName>
    </alternativeName>
</protein>
<keyword id="KW-0002">3D-structure</keyword>
<keyword id="KW-0010">Activator</keyword>
<keyword id="KW-0238">DNA-binding</keyword>
<keyword id="KW-1185">Reference proteome</keyword>
<keyword id="KW-0804">Transcription</keyword>
<keyword id="KW-0805">Transcription regulation</keyword>
<accession>P0A4U6</accession>
<accession>Q05061</accession>
<proteinExistence type="evidence at protein level"/>
<feature type="chain" id="PRO_0000100184" description="Global nitrogen regulator">
    <location>
        <begin position="1"/>
        <end position="223"/>
    </location>
</feature>
<feature type="domain" description="HTH crp-type" evidence="1">
    <location>
        <begin position="143"/>
        <end position="216"/>
    </location>
</feature>
<feature type="DNA-binding region" description="H-T-H motif" evidence="1">
    <location>
        <begin position="176"/>
        <end position="195"/>
    </location>
</feature>
<feature type="helix" evidence="3">
    <location>
        <begin position="7"/>
        <end position="16"/>
    </location>
</feature>
<feature type="strand" evidence="3">
    <location>
        <begin position="24"/>
        <end position="28"/>
    </location>
</feature>
<feature type="strand" evidence="3">
    <location>
        <begin position="33"/>
        <end position="35"/>
    </location>
</feature>
<feature type="strand" evidence="3">
    <location>
        <begin position="43"/>
        <end position="50"/>
    </location>
</feature>
<feature type="strand" evidence="3">
    <location>
        <begin position="52"/>
        <end position="57"/>
    </location>
</feature>
<feature type="strand" evidence="3">
    <location>
        <begin position="63"/>
        <end position="69"/>
    </location>
</feature>
<feature type="strand" evidence="3">
    <location>
        <begin position="74"/>
        <end position="76"/>
    </location>
</feature>
<feature type="helix" evidence="3">
    <location>
        <begin position="78"/>
        <end position="81"/>
    </location>
</feature>
<feature type="helix" evidence="2">
    <location>
        <begin position="83"/>
        <end position="85"/>
    </location>
</feature>
<feature type="strand" evidence="3">
    <location>
        <begin position="90"/>
        <end position="104"/>
    </location>
</feature>
<feature type="helix" evidence="3">
    <location>
        <begin position="105"/>
        <end position="112"/>
    </location>
</feature>
<feature type="helix" evidence="3">
    <location>
        <begin position="116"/>
        <end position="141"/>
    </location>
</feature>
<feature type="helix" evidence="3">
    <location>
        <begin position="145"/>
        <end position="160"/>
    </location>
</feature>
<feature type="strand" evidence="3">
    <location>
        <begin position="161"/>
        <end position="163"/>
    </location>
</feature>
<feature type="strand" evidence="3">
    <location>
        <begin position="165"/>
        <end position="170"/>
    </location>
</feature>
<feature type="helix" evidence="3">
    <location>
        <begin position="176"/>
        <end position="183"/>
    </location>
</feature>
<feature type="helix" evidence="3">
    <location>
        <begin position="187"/>
        <end position="199"/>
    </location>
</feature>
<feature type="strand" evidence="3">
    <location>
        <begin position="202"/>
        <end position="206"/>
    </location>
</feature>
<feature type="strand" evidence="3">
    <location>
        <begin position="209"/>
        <end position="212"/>
    </location>
</feature>
<feature type="helix" evidence="2">
    <location>
        <begin position="215"/>
        <end position="218"/>
    </location>
</feature>
<feature type="turn" evidence="2">
    <location>
        <begin position="219"/>
        <end position="221"/>
    </location>
</feature>
<gene>
    <name type="primary">ntcA</name>
    <name type="synonym">bifA</name>
    <name type="ordered locus">alr4392</name>
</gene>
<comment type="function">
    <text>Required for full expression of proteins subject to ammonium repression. Transcriptional activator of genes subject to nitrogen control.</text>
</comment>
<comment type="function">
    <text>Has affinity for the xisA upstream region. Binds to a 66 bp region containing three repeats of the consensus recognition sequence 5'-ACATT-3'.</text>
</comment>
<reference key="1">
    <citation type="journal article" date="1993" name="J. Bacteriol.">
        <title>Anabaena sp. strain PCC 7120 bifA gene encoding a sequence-specific DNA-binding protein cloned by in vivo transcriptional interference selection.</title>
        <authorList>
            <person name="Wei T.-F."/>
            <person name="Ramasubramanian T.S."/>
            <person name="Pu F."/>
            <person name="Golden J.W."/>
        </authorList>
    </citation>
    <scope>NUCLEOTIDE SEQUENCE [GENOMIC DNA]</scope>
</reference>
<reference key="2">
    <citation type="journal article" date="1993" name="J. Bacteriol.">
        <title>General distribution of the nitrogen control gene ntcA in cyanobacteria.</title>
        <authorList>
            <person name="Frias J.E."/>
            <person name="Merida A."/>
            <person name="Herrero A."/>
            <person name="Martin-Nieto J.M."/>
            <person name="Flores E."/>
        </authorList>
    </citation>
    <scope>NUCLEOTIDE SEQUENCE [GENOMIC DNA]</scope>
</reference>
<reference key="3">
    <citation type="journal article" date="2001" name="DNA Res.">
        <title>Complete genomic sequence of the filamentous nitrogen-fixing cyanobacterium Anabaena sp. strain PCC 7120.</title>
        <authorList>
            <person name="Kaneko T."/>
            <person name="Nakamura Y."/>
            <person name="Wolk C.P."/>
            <person name="Kuritz T."/>
            <person name="Sasamoto S."/>
            <person name="Watanabe A."/>
            <person name="Iriguchi M."/>
            <person name="Ishikawa A."/>
            <person name="Kawashima K."/>
            <person name="Kimura T."/>
            <person name="Kishida Y."/>
            <person name="Kohara M."/>
            <person name="Matsumoto M."/>
            <person name="Matsuno A."/>
            <person name="Muraki A."/>
            <person name="Nakazaki N."/>
            <person name="Shimpo S."/>
            <person name="Sugimoto M."/>
            <person name="Takazawa M."/>
            <person name="Yamada M."/>
            <person name="Yasuda M."/>
            <person name="Tabata S."/>
        </authorList>
    </citation>
    <scope>NUCLEOTIDE SEQUENCE [LARGE SCALE GENOMIC DNA]</scope>
    <source>
        <strain>PCC 7120 / SAG 25.82 / UTEX 2576</strain>
    </source>
</reference>
<sequence length="223" mass="24918">MIVTQDKALANVFRQMATGAFPPVVETFERNKTIFFPGDPAERVYFLLKGAVKLSRVYEAGEEITVALLRENSVFGVLSLLTGNKSDRFYHAVAFTPVELLSAPIEQVEQALKENPELSMLMLRGLSSRILQTEMMIETLAHRDMGSRLVSFLLILCRDFGVPCADGITIDLKLSHQAIAEAIGSTRVTVTRLLGDLREKKMISIHKKKITVHKPVTLSRQFT</sequence>
<name>NTCA_NOSS1</name>
<evidence type="ECO:0000255" key="1">
    <source>
        <dbReference type="PROSITE-ProRule" id="PRU00387"/>
    </source>
</evidence>
<evidence type="ECO:0007829" key="2">
    <source>
        <dbReference type="PDB" id="3LA3"/>
    </source>
</evidence>
<evidence type="ECO:0007829" key="3">
    <source>
        <dbReference type="PDB" id="3LA7"/>
    </source>
</evidence>
<dbReference type="EMBL" id="L10036">
    <property type="protein sequence ID" value="AAD04183.1"/>
    <property type="molecule type" value="Genomic_DNA"/>
</dbReference>
<dbReference type="EMBL" id="X71608">
    <property type="protein sequence ID" value="CAA50608.1"/>
    <property type="molecule type" value="Genomic_DNA"/>
</dbReference>
<dbReference type="EMBL" id="BA000019">
    <property type="protein sequence ID" value="BAB76091.1"/>
    <property type="molecule type" value="Genomic_DNA"/>
</dbReference>
<dbReference type="PIR" id="AH2354">
    <property type="entry name" value="AH2354"/>
</dbReference>
<dbReference type="PIR" id="B48640">
    <property type="entry name" value="B48640"/>
</dbReference>
<dbReference type="RefSeq" id="WP_010998529.1">
    <property type="nucleotide sequence ID" value="NZ_RSCN01000051.1"/>
</dbReference>
<dbReference type="PDB" id="3LA2">
    <property type="method" value="X-ray"/>
    <property type="resolution" value="2.60 A"/>
    <property type="chains" value="A/B=1-223"/>
</dbReference>
<dbReference type="PDB" id="3LA3">
    <property type="method" value="X-ray"/>
    <property type="resolution" value="2.40 A"/>
    <property type="chains" value="A/B=1-223"/>
</dbReference>
<dbReference type="PDB" id="3LA7">
    <property type="method" value="X-ray"/>
    <property type="resolution" value="1.90 A"/>
    <property type="chains" value="A/B=1-223"/>
</dbReference>
<dbReference type="PDB" id="8H3V">
    <property type="method" value="EM"/>
    <property type="resolution" value="4.50 A"/>
    <property type="chains" value="X/Y=1-223"/>
</dbReference>
<dbReference type="PDB" id="8H40">
    <property type="method" value="EM"/>
    <property type="resolution" value="3.60 A"/>
    <property type="chains" value="X/Y=1-223"/>
</dbReference>
<dbReference type="PDBsum" id="3LA2"/>
<dbReference type="PDBsum" id="3LA3"/>
<dbReference type="PDBsum" id="3LA7"/>
<dbReference type="PDBsum" id="8H3V"/>
<dbReference type="PDBsum" id="8H40"/>
<dbReference type="EMDB" id="EMD-34475"/>
<dbReference type="EMDB" id="EMD-34476"/>
<dbReference type="SMR" id="P0A4U6"/>
<dbReference type="DIP" id="DIP-59350N"/>
<dbReference type="STRING" id="103690.gene:10496441"/>
<dbReference type="GeneID" id="58726067"/>
<dbReference type="KEGG" id="ana:alr4392"/>
<dbReference type="eggNOG" id="COG0664">
    <property type="taxonomic scope" value="Bacteria"/>
</dbReference>
<dbReference type="OrthoDB" id="9810708at2"/>
<dbReference type="EvolutionaryTrace" id="P0A4U6"/>
<dbReference type="Proteomes" id="UP000002483">
    <property type="component" value="Chromosome"/>
</dbReference>
<dbReference type="CollecTF" id="EXPREG_00000760"/>
<dbReference type="GO" id="GO:0005829">
    <property type="term" value="C:cytosol"/>
    <property type="evidence" value="ECO:0007669"/>
    <property type="project" value="TreeGrafter"/>
</dbReference>
<dbReference type="GO" id="GO:0003677">
    <property type="term" value="F:DNA binding"/>
    <property type="evidence" value="ECO:0007669"/>
    <property type="project" value="UniProtKB-KW"/>
</dbReference>
<dbReference type="GO" id="GO:0003700">
    <property type="term" value="F:DNA-binding transcription factor activity"/>
    <property type="evidence" value="ECO:0007669"/>
    <property type="project" value="InterPro"/>
</dbReference>
<dbReference type="CDD" id="cd00038">
    <property type="entry name" value="CAP_ED"/>
    <property type="match status" value="1"/>
</dbReference>
<dbReference type="CDD" id="cd00092">
    <property type="entry name" value="HTH_CRP"/>
    <property type="match status" value="1"/>
</dbReference>
<dbReference type="FunFam" id="1.10.10.10:FF:000240">
    <property type="entry name" value="Global nitrogen regulator NtcA"/>
    <property type="match status" value="1"/>
</dbReference>
<dbReference type="FunFam" id="2.60.120.10:FF:000054">
    <property type="entry name" value="Global nitrogen regulator NtcA"/>
    <property type="match status" value="1"/>
</dbReference>
<dbReference type="Gene3D" id="2.60.120.10">
    <property type="entry name" value="Jelly Rolls"/>
    <property type="match status" value="1"/>
</dbReference>
<dbReference type="Gene3D" id="1.10.10.10">
    <property type="entry name" value="Winged helix-like DNA-binding domain superfamily/Winged helix DNA-binding domain"/>
    <property type="match status" value="1"/>
</dbReference>
<dbReference type="InterPro" id="IPR000595">
    <property type="entry name" value="cNMP-bd_dom"/>
</dbReference>
<dbReference type="InterPro" id="IPR018490">
    <property type="entry name" value="cNMP-bd_dom_sf"/>
</dbReference>
<dbReference type="InterPro" id="IPR050397">
    <property type="entry name" value="Env_Response_Regulators"/>
</dbReference>
<dbReference type="InterPro" id="IPR012318">
    <property type="entry name" value="HTH_CRP"/>
</dbReference>
<dbReference type="InterPro" id="IPR014710">
    <property type="entry name" value="RmlC-like_jellyroll"/>
</dbReference>
<dbReference type="InterPro" id="IPR018335">
    <property type="entry name" value="Tscrpt_reg_HTH_Crp-type_CS"/>
</dbReference>
<dbReference type="InterPro" id="IPR022299">
    <property type="entry name" value="Tscrpt_reg_NtcA"/>
</dbReference>
<dbReference type="InterPro" id="IPR036388">
    <property type="entry name" value="WH-like_DNA-bd_sf"/>
</dbReference>
<dbReference type="InterPro" id="IPR036390">
    <property type="entry name" value="WH_DNA-bd_sf"/>
</dbReference>
<dbReference type="NCBIfam" id="TIGR03697">
    <property type="entry name" value="NtcA_cyano"/>
    <property type="match status" value="1"/>
</dbReference>
<dbReference type="PANTHER" id="PTHR24567">
    <property type="entry name" value="CRP FAMILY TRANSCRIPTIONAL REGULATORY PROTEIN"/>
    <property type="match status" value="1"/>
</dbReference>
<dbReference type="PANTHER" id="PTHR24567:SF65">
    <property type="entry name" value="REGULATORY PROTEIN CYSR HOMOLOG"/>
    <property type="match status" value="1"/>
</dbReference>
<dbReference type="Pfam" id="PF00027">
    <property type="entry name" value="cNMP_binding"/>
    <property type="match status" value="1"/>
</dbReference>
<dbReference type="Pfam" id="PF13545">
    <property type="entry name" value="HTH_Crp_2"/>
    <property type="match status" value="1"/>
</dbReference>
<dbReference type="PRINTS" id="PR00034">
    <property type="entry name" value="HTHCRP"/>
</dbReference>
<dbReference type="SMART" id="SM00100">
    <property type="entry name" value="cNMP"/>
    <property type="match status" value="1"/>
</dbReference>
<dbReference type="SMART" id="SM00419">
    <property type="entry name" value="HTH_CRP"/>
    <property type="match status" value="1"/>
</dbReference>
<dbReference type="SUPFAM" id="SSF51206">
    <property type="entry name" value="cAMP-binding domain-like"/>
    <property type="match status" value="1"/>
</dbReference>
<dbReference type="SUPFAM" id="SSF46785">
    <property type="entry name" value="Winged helix' DNA-binding domain"/>
    <property type="match status" value="1"/>
</dbReference>
<dbReference type="PROSITE" id="PS50042">
    <property type="entry name" value="CNMP_BINDING_3"/>
    <property type="match status" value="1"/>
</dbReference>
<dbReference type="PROSITE" id="PS00042">
    <property type="entry name" value="HTH_CRP_1"/>
    <property type="match status" value="1"/>
</dbReference>
<dbReference type="PROSITE" id="PS51063">
    <property type="entry name" value="HTH_CRP_2"/>
    <property type="match status" value="1"/>
</dbReference>